<protein>
    <recommendedName>
        <fullName>Increased recombination centers protein 19</fullName>
    </recommendedName>
</protein>
<evidence type="ECO:0000250" key="1"/>
<evidence type="ECO:0000305" key="2"/>
<organism>
    <name type="scientific">Candida glabrata (strain ATCC 2001 / BCRC 20586 / JCM 3761 / NBRC 0622 / NRRL Y-65 / CBS 138)</name>
    <name type="common">Yeast</name>
    <name type="synonym">Nakaseomyces glabratus</name>
    <dbReference type="NCBI Taxonomy" id="284593"/>
    <lineage>
        <taxon>Eukaryota</taxon>
        <taxon>Fungi</taxon>
        <taxon>Dikarya</taxon>
        <taxon>Ascomycota</taxon>
        <taxon>Saccharomycotina</taxon>
        <taxon>Saccharomycetes</taxon>
        <taxon>Saccharomycetales</taxon>
        <taxon>Saccharomycetaceae</taxon>
        <taxon>Nakaseomyces</taxon>
    </lineage>
</organism>
<comment type="function">
    <text evidence="1">Involved in sporulation and maintenance of the mitochondrial DNA. Is probably involved in a pathway contributing to genomic integrity (By similarity).</text>
</comment>
<comment type="similarity">
    <text evidence="2">Belongs to the IRC19 family.</text>
</comment>
<feature type="chain" id="PRO_0000399058" description="Increased recombination centers protein 19">
    <location>
        <begin position="1"/>
        <end position="211"/>
    </location>
</feature>
<accession>Q6FW54</accession>
<sequence length="211" mass="24813">MVRRGVGTIETVNALVNDNYALIRNVAKYMLNDKGLTNAEFLRASYRRFIRLRPFVSNRSMVKDTYTDYIRYKYRYEDYPKRMAMIGVQCDNQLNRSQVKNSLSFVAKACSFIDESKGTKFEVARDNTMCRQILKNLLTIHYEKTSHTNEKRTPLRHIFQYSFEHMKDINKSTNSQSYSKPASPKSSLILDLYGEFDRDILLLNNLLNMRL</sequence>
<gene>
    <name type="primary">IRC19</name>
    <name type="synonym">RRG4</name>
    <name type="ordered locus">CAGL0D02860g</name>
</gene>
<proteinExistence type="inferred from homology"/>
<reference key="1">
    <citation type="journal article" date="2004" name="Nature">
        <title>Genome evolution in yeasts.</title>
        <authorList>
            <person name="Dujon B."/>
            <person name="Sherman D."/>
            <person name="Fischer G."/>
            <person name="Durrens P."/>
            <person name="Casaregola S."/>
            <person name="Lafontaine I."/>
            <person name="de Montigny J."/>
            <person name="Marck C."/>
            <person name="Neuveglise C."/>
            <person name="Talla E."/>
            <person name="Goffard N."/>
            <person name="Frangeul L."/>
            <person name="Aigle M."/>
            <person name="Anthouard V."/>
            <person name="Babour A."/>
            <person name="Barbe V."/>
            <person name="Barnay S."/>
            <person name="Blanchin S."/>
            <person name="Beckerich J.-M."/>
            <person name="Beyne E."/>
            <person name="Bleykasten C."/>
            <person name="Boisrame A."/>
            <person name="Boyer J."/>
            <person name="Cattolico L."/>
            <person name="Confanioleri F."/>
            <person name="de Daruvar A."/>
            <person name="Despons L."/>
            <person name="Fabre E."/>
            <person name="Fairhead C."/>
            <person name="Ferry-Dumazet H."/>
            <person name="Groppi A."/>
            <person name="Hantraye F."/>
            <person name="Hennequin C."/>
            <person name="Jauniaux N."/>
            <person name="Joyet P."/>
            <person name="Kachouri R."/>
            <person name="Kerrest A."/>
            <person name="Koszul R."/>
            <person name="Lemaire M."/>
            <person name="Lesur I."/>
            <person name="Ma L."/>
            <person name="Muller H."/>
            <person name="Nicaud J.-M."/>
            <person name="Nikolski M."/>
            <person name="Oztas S."/>
            <person name="Ozier-Kalogeropoulos O."/>
            <person name="Pellenz S."/>
            <person name="Potier S."/>
            <person name="Richard G.-F."/>
            <person name="Straub M.-L."/>
            <person name="Suleau A."/>
            <person name="Swennen D."/>
            <person name="Tekaia F."/>
            <person name="Wesolowski-Louvel M."/>
            <person name="Westhof E."/>
            <person name="Wirth B."/>
            <person name="Zeniou-Meyer M."/>
            <person name="Zivanovic Y."/>
            <person name="Bolotin-Fukuhara M."/>
            <person name="Thierry A."/>
            <person name="Bouchier C."/>
            <person name="Caudron B."/>
            <person name="Scarpelli C."/>
            <person name="Gaillardin C."/>
            <person name="Weissenbach J."/>
            <person name="Wincker P."/>
            <person name="Souciet J.-L."/>
        </authorList>
    </citation>
    <scope>NUCLEOTIDE SEQUENCE [LARGE SCALE GENOMIC DNA]</scope>
    <source>
        <strain>ATCC 2001 / BCRC 20586 / JCM 3761 / NBRC 0622 / NRRL Y-65 / CBS 138</strain>
    </source>
</reference>
<dbReference type="EMBL" id="CR380950">
    <property type="protein sequence ID" value="CAG58451.1"/>
    <property type="molecule type" value="Genomic_DNA"/>
</dbReference>
<dbReference type="RefSeq" id="XP_445540.1">
    <property type="nucleotide sequence ID" value="XM_445540.1"/>
</dbReference>
<dbReference type="FunCoup" id="Q6FW54">
    <property type="interactions" value="28"/>
</dbReference>
<dbReference type="EnsemblFungi" id="CAGL0D02860g-T">
    <property type="protein sequence ID" value="CAGL0D02860g-T-p1"/>
    <property type="gene ID" value="CAGL0D02860g"/>
</dbReference>
<dbReference type="KEGG" id="cgr:2887207"/>
<dbReference type="CGD" id="CAL0128373">
    <property type="gene designation" value="CAGL0D02860g"/>
</dbReference>
<dbReference type="VEuPathDB" id="FungiDB:CAGL0D02860g"/>
<dbReference type="eggNOG" id="ENOG502S35W">
    <property type="taxonomic scope" value="Eukaryota"/>
</dbReference>
<dbReference type="HOGENOM" id="CLU_106818_0_0_1"/>
<dbReference type="InParanoid" id="Q6FW54"/>
<dbReference type="OMA" id="FMRLKPF"/>
<dbReference type="Proteomes" id="UP000002428">
    <property type="component" value="Chromosome D"/>
</dbReference>
<dbReference type="GO" id="GO:0030437">
    <property type="term" value="P:ascospore formation"/>
    <property type="evidence" value="ECO:0007669"/>
    <property type="project" value="EnsemblFungi"/>
</dbReference>
<dbReference type="GO" id="GO:0006302">
    <property type="term" value="P:double-strand break repair"/>
    <property type="evidence" value="ECO:0007669"/>
    <property type="project" value="EnsemblFungi"/>
</dbReference>
<dbReference type="GO" id="GO:0006312">
    <property type="term" value="P:mitotic recombination"/>
    <property type="evidence" value="ECO:0007669"/>
    <property type="project" value="EnsemblFungi"/>
</dbReference>
<dbReference type="InterPro" id="IPR016613">
    <property type="entry name" value="Irc19"/>
</dbReference>
<dbReference type="PIRSF" id="PIRSF013329">
    <property type="entry name" value="UCP013329"/>
    <property type="match status" value="1"/>
</dbReference>
<name>IRC19_CANGA</name>
<keyword id="KW-1185">Reference proteome</keyword>
<keyword id="KW-0749">Sporulation</keyword>